<gene>
    <name evidence="1" type="primary">rpsU</name>
    <name type="ordered locus">SAUSA300_1535</name>
</gene>
<proteinExistence type="inferred from homology"/>
<protein>
    <recommendedName>
        <fullName evidence="1">Small ribosomal subunit protein bS21</fullName>
    </recommendedName>
    <alternativeName>
        <fullName evidence="2">30S ribosomal protein S21</fullName>
    </alternativeName>
</protein>
<feature type="chain" id="PRO_0000266773" description="Small ribosomal subunit protein bS21">
    <location>
        <begin position="1"/>
        <end position="58"/>
    </location>
</feature>
<organism>
    <name type="scientific">Staphylococcus aureus (strain USA300)</name>
    <dbReference type="NCBI Taxonomy" id="367830"/>
    <lineage>
        <taxon>Bacteria</taxon>
        <taxon>Bacillati</taxon>
        <taxon>Bacillota</taxon>
        <taxon>Bacilli</taxon>
        <taxon>Bacillales</taxon>
        <taxon>Staphylococcaceae</taxon>
        <taxon>Staphylococcus</taxon>
    </lineage>
</organism>
<evidence type="ECO:0000255" key="1">
    <source>
        <dbReference type="HAMAP-Rule" id="MF_00358"/>
    </source>
</evidence>
<evidence type="ECO:0000305" key="2"/>
<name>RS21_STAA3</name>
<dbReference type="EMBL" id="CP000255">
    <property type="protein sequence ID" value="ABD22843.1"/>
    <property type="molecule type" value="Genomic_DNA"/>
</dbReference>
<dbReference type="RefSeq" id="WP_000048060.1">
    <property type="nucleotide sequence ID" value="NZ_CP027476.1"/>
</dbReference>
<dbReference type="SMR" id="Q2FGE8"/>
<dbReference type="GeneID" id="98345946"/>
<dbReference type="KEGG" id="saa:SAUSA300_1535"/>
<dbReference type="HOGENOM" id="CLU_159258_3_2_9"/>
<dbReference type="OMA" id="HQHFEKP"/>
<dbReference type="Proteomes" id="UP000001939">
    <property type="component" value="Chromosome"/>
</dbReference>
<dbReference type="GO" id="GO:1990904">
    <property type="term" value="C:ribonucleoprotein complex"/>
    <property type="evidence" value="ECO:0007669"/>
    <property type="project" value="UniProtKB-KW"/>
</dbReference>
<dbReference type="GO" id="GO:0005840">
    <property type="term" value="C:ribosome"/>
    <property type="evidence" value="ECO:0007669"/>
    <property type="project" value="UniProtKB-KW"/>
</dbReference>
<dbReference type="GO" id="GO:0003735">
    <property type="term" value="F:structural constituent of ribosome"/>
    <property type="evidence" value="ECO:0007669"/>
    <property type="project" value="InterPro"/>
</dbReference>
<dbReference type="GO" id="GO:0006412">
    <property type="term" value="P:translation"/>
    <property type="evidence" value="ECO:0007669"/>
    <property type="project" value="UniProtKB-UniRule"/>
</dbReference>
<dbReference type="Gene3D" id="1.20.5.1150">
    <property type="entry name" value="Ribosomal protein S8"/>
    <property type="match status" value="1"/>
</dbReference>
<dbReference type="HAMAP" id="MF_00358">
    <property type="entry name" value="Ribosomal_bS21"/>
    <property type="match status" value="1"/>
</dbReference>
<dbReference type="InterPro" id="IPR001911">
    <property type="entry name" value="Ribosomal_bS21"/>
</dbReference>
<dbReference type="InterPro" id="IPR018278">
    <property type="entry name" value="Ribosomal_bS21_CS"/>
</dbReference>
<dbReference type="InterPro" id="IPR038380">
    <property type="entry name" value="Ribosomal_bS21_sf"/>
</dbReference>
<dbReference type="NCBIfam" id="TIGR00030">
    <property type="entry name" value="S21p"/>
    <property type="match status" value="1"/>
</dbReference>
<dbReference type="PANTHER" id="PTHR21109">
    <property type="entry name" value="MITOCHONDRIAL 28S RIBOSOMAL PROTEIN S21"/>
    <property type="match status" value="1"/>
</dbReference>
<dbReference type="PANTHER" id="PTHR21109:SF22">
    <property type="entry name" value="SMALL RIBOSOMAL SUBUNIT PROTEIN BS21"/>
    <property type="match status" value="1"/>
</dbReference>
<dbReference type="Pfam" id="PF01165">
    <property type="entry name" value="Ribosomal_S21"/>
    <property type="match status" value="1"/>
</dbReference>
<dbReference type="PRINTS" id="PR00976">
    <property type="entry name" value="RIBOSOMALS21"/>
</dbReference>
<dbReference type="PROSITE" id="PS01181">
    <property type="entry name" value="RIBOSOMAL_S21"/>
    <property type="match status" value="1"/>
</dbReference>
<accession>Q2FGE8</accession>
<reference key="1">
    <citation type="journal article" date="2006" name="Lancet">
        <title>Complete genome sequence of USA300, an epidemic clone of community-acquired meticillin-resistant Staphylococcus aureus.</title>
        <authorList>
            <person name="Diep B.A."/>
            <person name="Gill S.R."/>
            <person name="Chang R.F."/>
            <person name="Phan T.H."/>
            <person name="Chen J.H."/>
            <person name="Davidson M.G."/>
            <person name="Lin F."/>
            <person name="Lin J."/>
            <person name="Carleton H.A."/>
            <person name="Mongodin E.F."/>
            <person name="Sensabaugh G.F."/>
            <person name="Perdreau-Remington F."/>
        </authorList>
    </citation>
    <scope>NUCLEOTIDE SEQUENCE [LARGE SCALE GENOMIC DNA]</scope>
    <source>
        <strain>USA300</strain>
    </source>
</reference>
<comment type="similarity">
    <text evidence="1">Belongs to the bacterial ribosomal protein bS21 family.</text>
</comment>
<keyword id="KW-0687">Ribonucleoprotein</keyword>
<keyword id="KW-0689">Ribosomal protein</keyword>
<sequence length="58" mass="6972">MSKTVVRKNESLEDALRRFKRSVSKSGTIQEVRKREFYEKPSVKRKKKSEAARKRKFK</sequence>